<gene>
    <name evidence="1" type="primary">tdk</name>
    <name type="ordered locus">XOO0241</name>
</gene>
<name>KITH_XANOR</name>
<keyword id="KW-0067">ATP-binding</keyword>
<keyword id="KW-0963">Cytoplasm</keyword>
<keyword id="KW-0237">DNA synthesis</keyword>
<keyword id="KW-0418">Kinase</keyword>
<keyword id="KW-0547">Nucleotide-binding</keyword>
<keyword id="KW-1185">Reference proteome</keyword>
<keyword id="KW-0808">Transferase</keyword>
<evidence type="ECO:0000255" key="1">
    <source>
        <dbReference type="HAMAP-Rule" id="MF_00124"/>
    </source>
</evidence>
<sequence>MAKLYFYYSAMNAGKTTTLLQSAHNYRERGMRTLILTPKLDHRAGSGVVASRIGLRADGRIFERDTGLQQLVERDIHNDGALHCVLVDEAQFLSRAQVWQLSEVVDRLRVPVLCYGLRTDFRGELFEGSQFLLAWADELEEIKTICHSGSKATMTVRVDAQGHAVQDGPQVEIGGNERYVSVSRAEFKKIMRGEGRIDPLQIALPLPVA</sequence>
<organism>
    <name type="scientific">Xanthomonas oryzae pv. oryzae (strain KACC10331 / KXO85)</name>
    <dbReference type="NCBI Taxonomy" id="291331"/>
    <lineage>
        <taxon>Bacteria</taxon>
        <taxon>Pseudomonadati</taxon>
        <taxon>Pseudomonadota</taxon>
        <taxon>Gammaproteobacteria</taxon>
        <taxon>Lysobacterales</taxon>
        <taxon>Lysobacteraceae</taxon>
        <taxon>Xanthomonas</taxon>
    </lineage>
</organism>
<feature type="chain" id="PRO_0000175050" description="Thymidine kinase">
    <location>
        <begin position="1"/>
        <end position="209"/>
    </location>
</feature>
<feature type="active site" description="Proton acceptor" evidence="1">
    <location>
        <position position="89"/>
    </location>
</feature>
<feature type="binding site" evidence="1">
    <location>
        <begin position="9"/>
        <end position="16"/>
    </location>
    <ligand>
        <name>ATP</name>
        <dbReference type="ChEBI" id="CHEBI:30616"/>
    </ligand>
</feature>
<feature type="binding site" evidence="1">
    <location>
        <begin position="88"/>
        <end position="91"/>
    </location>
    <ligand>
        <name>ATP</name>
        <dbReference type="ChEBI" id="CHEBI:30616"/>
    </ligand>
</feature>
<proteinExistence type="inferred from homology"/>
<reference key="1">
    <citation type="journal article" date="2005" name="Nucleic Acids Res.">
        <title>The genome sequence of Xanthomonas oryzae pathovar oryzae KACC10331, the bacterial blight pathogen of rice.</title>
        <authorList>
            <person name="Lee B.-M."/>
            <person name="Park Y.-J."/>
            <person name="Park D.-S."/>
            <person name="Kang H.-W."/>
            <person name="Kim J.-G."/>
            <person name="Song E.-S."/>
            <person name="Park I.-C."/>
            <person name="Yoon U.-H."/>
            <person name="Hahn J.-H."/>
            <person name="Koo B.-S."/>
            <person name="Lee G.-B."/>
            <person name="Kim H."/>
            <person name="Park H.-S."/>
            <person name="Yoon K.-O."/>
            <person name="Kim J.-H."/>
            <person name="Jung C.-H."/>
            <person name="Koh N.-H."/>
            <person name="Seo J.-S."/>
            <person name="Go S.-J."/>
        </authorList>
    </citation>
    <scope>NUCLEOTIDE SEQUENCE [LARGE SCALE GENOMIC DNA]</scope>
    <source>
        <strain>KACC10331 / KXO85</strain>
    </source>
</reference>
<protein>
    <recommendedName>
        <fullName evidence="1">Thymidine kinase</fullName>
        <ecNumber evidence="1">2.7.1.21</ecNumber>
    </recommendedName>
</protein>
<accession>Q5H6C5</accession>
<comment type="catalytic activity">
    <reaction evidence="1">
        <text>thymidine + ATP = dTMP + ADP + H(+)</text>
        <dbReference type="Rhea" id="RHEA:19129"/>
        <dbReference type="ChEBI" id="CHEBI:15378"/>
        <dbReference type="ChEBI" id="CHEBI:17748"/>
        <dbReference type="ChEBI" id="CHEBI:30616"/>
        <dbReference type="ChEBI" id="CHEBI:63528"/>
        <dbReference type="ChEBI" id="CHEBI:456216"/>
        <dbReference type="EC" id="2.7.1.21"/>
    </reaction>
</comment>
<comment type="subunit">
    <text evidence="1">Homotetramer.</text>
</comment>
<comment type="subcellular location">
    <subcellularLocation>
        <location evidence="1">Cytoplasm</location>
    </subcellularLocation>
</comment>
<comment type="similarity">
    <text evidence="1">Belongs to the thymidine kinase family.</text>
</comment>
<dbReference type="EC" id="2.7.1.21" evidence="1"/>
<dbReference type="EMBL" id="AE013598">
    <property type="protein sequence ID" value="AAW73495.1"/>
    <property type="molecule type" value="Genomic_DNA"/>
</dbReference>
<dbReference type="SMR" id="Q5H6C5"/>
<dbReference type="STRING" id="291331.XOO0241"/>
<dbReference type="KEGG" id="xoo:XOO0241"/>
<dbReference type="HOGENOM" id="CLU_064400_2_1_6"/>
<dbReference type="Proteomes" id="UP000006735">
    <property type="component" value="Chromosome"/>
</dbReference>
<dbReference type="GO" id="GO:0005829">
    <property type="term" value="C:cytosol"/>
    <property type="evidence" value="ECO:0007669"/>
    <property type="project" value="TreeGrafter"/>
</dbReference>
<dbReference type="GO" id="GO:0005524">
    <property type="term" value="F:ATP binding"/>
    <property type="evidence" value="ECO:0007669"/>
    <property type="project" value="UniProtKB-UniRule"/>
</dbReference>
<dbReference type="GO" id="GO:0004797">
    <property type="term" value="F:thymidine kinase activity"/>
    <property type="evidence" value="ECO:0007669"/>
    <property type="project" value="UniProtKB-UniRule"/>
</dbReference>
<dbReference type="GO" id="GO:0071897">
    <property type="term" value="P:DNA biosynthetic process"/>
    <property type="evidence" value="ECO:0007669"/>
    <property type="project" value="UniProtKB-KW"/>
</dbReference>
<dbReference type="GO" id="GO:0046104">
    <property type="term" value="P:thymidine metabolic process"/>
    <property type="evidence" value="ECO:0007669"/>
    <property type="project" value="TreeGrafter"/>
</dbReference>
<dbReference type="FunFam" id="3.40.50.300:FF:000323">
    <property type="entry name" value="Thymidine kinase"/>
    <property type="match status" value="1"/>
</dbReference>
<dbReference type="Gene3D" id="3.40.50.300">
    <property type="entry name" value="P-loop containing nucleotide triphosphate hydrolases"/>
    <property type="match status" value="1"/>
</dbReference>
<dbReference type="HAMAP" id="MF_00124">
    <property type="entry name" value="Thymidine_kinase"/>
    <property type="match status" value="1"/>
</dbReference>
<dbReference type="InterPro" id="IPR027417">
    <property type="entry name" value="P-loop_NTPase"/>
</dbReference>
<dbReference type="InterPro" id="IPR001267">
    <property type="entry name" value="Thymidine_kinase"/>
</dbReference>
<dbReference type="NCBIfam" id="NF003300">
    <property type="entry name" value="PRK04296.1-5"/>
    <property type="match status" value="1"/>
</dbReference>
<dbReference type="PANTHER" id="PTHR11441">
    <property type="entry name" value="THYMIDINE KINASE"/>
    <property type="match status" value="1"/>
</dbReference>
<dbReference type="PANTHER" id="PTHR11441:SF0">
    <property type="entry name" value="THYMIDINE KINASE, CYTOSOLIC"/>
    <property type="match status" value="1"/>
</dbReference>
<dbReference type="Pfam" id="PF00265">
    <property type="entry name" value="TK"/>
    <property type="match status" value="1"/>
</dbReference>
<dbReference type="PIRSF" id="PIRSF035805">
    <property type="entry name" value="TK_cell"/>
    <property type="match status" value="1"/>
</dbReference>
<dbReference type="SUPFAM" id="SSF57716">
    <property type="entry name" value="Glucocorticoid receptor-like (DNA-binding domain)"/>
    <property type="match status" value="1"/>
</dbReference>
<dbReference type="SUPFAM" id="SSF52540">
    <property type="entry name" value="P-loop containing nucleoside triphosphate hydrolases"/>
    <property type="match status" value="1"/>
</dbReference>